<gene>
    <name type="primary">tetR</name>
</gene>
<comment type="function">
    <text>TetR is the repressor of the tetracycline resistance element; its N-terminal region forms a helix-turn-helix structure and binds DNA. Binding of tetracycline to TetR reduces the repressor affinity for the tetracycline resistance gene (tetA) promoter operator sites.</text>
</comment>
<comment type="induction">
    <text>By the [Mg-tetracycline]+ complex.</text>
</comment>
<accession>P03038</accession>
<evidence type="ECO:0000250" key="1">
    <source>
        <dbReference type="UniProtKB" id="P0ACT4"/>
    </source>
</evidence>
<evidence type="ECO:0000255" key="2">
    <source>
        <dbReference type="PROSITE-ProRule" id="PRU00335"/>
    </source>
</evidence>
<evidence type="ECO:0000305" key="3"/>
<evidence type="ECO:0007829" key="4">
    <source>
        <dbReference type="PDB" id="5MRU"/>
    </source>
</evidence>
<proteinExistence type="evidence at protein level"/>
<reference key="1">
    <citation type="journal article" date="1992" name="Gene">
        <title>Complete nucleotide sequence of Tn1721: gene organization and a novel gene product with features of a chemotaxis protein.</title>
        <authorList>
            <person name="Allmeier H."/>
            <person name="Cresnar B."/>
            <person name="Greck M."/>
            <person name="Schmitt R."/>
        </authorList>
    </citation>
    <scope>NUCLEOTIDE SEQUENCE [GENOMIC DNA]</scope>
    <source>
        <transposon>Tn1721</transposon>
    </source>
</reference>
<reference key="2">
    <citation type="submission" date="1993-11" db="EMBL/GenBank/DDBJ databases">
        <authorList>
            <person name="Trueman P."/>
            <person name="Sharpe G.S."/>
            <person name="Barth P.T."/>
        </authorList>
    </citation>
    <scope>NUCLEOTIDE SEQUENCE [GENOMIC DNA]</scope>
    <source>
        <plasmid>IncP-alpha RP4</plasmid>
    </source>
</reference>
<reference key="3">
    <citation type="journal article" date="1983" name="Nucleic Acids Res.">
        <title>The tetracycline resistance determinants of RP1 and Tn1721: nucleotide sequence analysis.</title>
        <authorList>
            <person name="Waters S.H."/>
            <person name="Rogowsky P."/>
            <person name="Grinsted J."/>
            <person name="Altenbuchner J."/>
            <person name="Schmitt R."/>
        </authorList>
    </citation>
    <scope>NUCLEOTIDE SEQUENCE [GENOMIC DNA]</scope>
    <source>
        <plasmid>RP1</plasmid>
        <transposon>Tn1721</transposon>
    </source>
</reference>
<reference key="4">
    <citation type="journal article" date="1988" name="EMBO J.">
        <title>A threonine to alanine exchange at position 40 of Tet repressor alters the recognition of the sixth base pair of tet operator from GC to AT.</title>
        <authorList>
            <person name="Altschmied L."/>
            <person name="Baumeister R."/>
            <person name="Pfleiderer K."/>
            <person name="Hillen W."/>
        </authorList>
    </citation>
    <scope>NUCLEOTIDE SEQUENCE [GENOMIC DNA] OF 1-100</scope>
</reference>
<feature type="chain" id="PRO_0000070612" description="Tetracycline repressor protein class A from transposon 1721">
    <location>
        <begin position="1"/>
        <end position="216"/>
    </location>
</feature>
<feature type="domain" description="HTH tetR-type" evidence="2">
    <location>
        <begin position="3"/>
        <end position="63"/>
    </location>
</feature>
<feature type="DNA-binding region" description="H-T-H motif" evidence="2">
    <location>
        <begin position="26"/>
        <end position="45"/>
    </location>
</feature>
<feature type="binding site" evidence="1">
    <location>
        <position position="64"/>
    </location>
    <ligand>
        <name>tetracycline</name>
        <dbReference type="ChEBI" id="CHEBI:77932"/>
    </ligand>
</feature>
<feature type="binding site" evidence="1">
    <location>
        <position position="82"/>
    </location>
    <ligand>
        <name>tetracycline</name>
        <dbReference type="ChEBI" id="CHEBI:77932"/>
    </ligand>
</feature>
<feature type="binding site" evidence="1">
    <location>
        <position position="100"/>
    </location>
    <ligand>
        <name>Mg(2+)</name>
        <dbReference type="ChEBI" id="CHEBI:18420"/>
    </ligand>
</feature>
<feature type="sequence conflict" description="In Ref. 3; CAA24908." evidence="3" ref="3">
    <original>TH</original>
    <variation>ST</variation>
    <location>
        <begin position="65"/>
        <end position="66"/>
    </location>
</feature>
<feature type="sequence conflict" description="In Ref. 3; CAA24908." evidence="3" ref="3">
    <original>I</original>
    <variation>T</variation>
    <location>
        <position position="80"/>
    </location>
</feature>
<feature type="sequence conflict" description="In Ref. 3; CAA24908." evidence="3" ref="3">
    <original>DA</original>
    <variation>ES</variation>
    <location>
        <begin position="154"/>
        <end position="155"/>
    </location>
</feature>
<feature type="helix" evidence="4">
    <location>
        <begin position="7"/>
        <end position="24"/>
    </location>
</feature>
<feature type="helix" evidence="4">
    <location>
        <begin position="27"/>
        <end position="34"/>
    </location>
</feature>
<feature type="helix" evidence="4">
    <location>
        <begin position="48"/>
        <end position="63"/>
    </location>
</feature>
<feature type="helix" evidence="4">
    <location>
        <begin position="75"/>
        <end position="91"/>
    </location>
</feature>
<feature type="helix" evidence="4">
    <location>
        <begin position="96"/>
        <end position="100"/>
    </location>
</feature>
<feature type="helix" evidence="4">
    <location>
        <begin position="107"/>
        <end position="123"/>
    </location>
</feature>
<feature type="helix" evidence="4">
    <location>
        <begin position="127"/>
        <end position="153"/>
    </location>
</feature>
<feature type="turn" evidence="4">
    <location>
        <begin position="154"/>
        <end position="156"/>
    </location>
</feature>
<feature type="helix" evidence="4">
    <location>
        <begin position="183"/>
        <end position="199"/>
    </location>
</feature>
<geneLocation type="plasmid">
    <name>RP1</name>
</geneLocation>
<geneLocation type="plasmid">
    <name>IncP-alpha RP4</name>
</geneLocation>
<keyword id="KW-0002">3D-structure</keyword>
<keyword id="KW-0046">Antibiotic resistance</keyword>
<keyword id="KW-0238">DNA-binding</keyword>
<keyword id="KW-0460">Magnesium</keyword>
<keyword id="KW-0479">Metal-binding</keyword>
<keyword id="KW-0614">Plasmid</keyword>
<keyword id="KW-0678">Repressor</keyword>
<keyword id="KW-0804">Transcription</keyword>
<keyword id="KW-0805">Transcription regulation</keyword>
<keyword id="KW-0814">Transposable element</keyword>
<protein>
    <recommendedName>
        <fullName>Tetracycline repressor protein class A from transposon 1721</fullName>
    </recommendedName>
</protein>
<organism>
    <name type="scientific">Escherichia coli</name>
    <dbReference type="NCBI Taxonomy" id="562"/>
    <lineage>
        <taxon>Bacteria</taxon>
        <taxon>Pseudomonadati</taxon>
        <taxon>Pseudomonadota</taxon>
        <taxon>Gammaproteobacteria</taxon>
        <taxon>Enterobacterales</taxon>
        <taxon>Enterobacteriaceae</taxon>
        <taxon>Escherichia</taxon>
    </lineage>
</organism>
<sequence>MTKLQPNTVIRAALDLLNEVGVDGLTTRKLAERLGVQQPALYWHFRNKRALLDALAEAMLAENHTHSVPRADDDWRSFLIGNARSFRQALLAYRDGARIHAGTRPGAPQMETADAQLRFLCEAGFSAGDAVNALMTISYFTVGAVLEEQAGDSDAGERGGTVEQAPLSPLLRAAIDAFDEAGPDAAFEQGLAVIVDGLAKRRLVVRNVEGPRKGDD</sequence>
<dbReference type="EMBL" id="X61367">
    <property type="protein sequence ID" value="CAA43642.1"/>
    <property type="molecule type" value="Genomic_DNA"/>
</dbReference>
<dbReference type="EMBL" id="X75761">
    <property type="protein sequence ID" value="CAA53388.1"/>
    <property type="molecule type" value="Genomic_DNA"/>
</dbReference>
<dbReference type="EMBL" id="X00006">
    <property type="protein sequence ID" value="CAA24908.1"/>
    <property type="molecule type" value="Genomic_DNA"/>
</dbReference>
<dbReference type="PIR" id="A03574">
    <property type="entry name" value="RPECR1"/>
</dbReference>
<dbReference type="PIR" id="JQ1478">
    <property type="entry name" value="JQ1478"/>
</dbReference>
<dbReference type="RefSeq" id="NP_957552.1">
    <property type="nucleotide sequence ID" value="NC_005327.1"/>
</dbReference>
<dbReference type="RefSeq" id="YP_006953646.1">
    <property type="nucleotide sequence ID" value="NC_019082.1"/>
</dbReference>
<dbReference type="RefSeq" id="YP_009060102.1">
    <property type="nucleotide sequence ID" value="NC_024956.1"/>
</dbReference>
<dbReference type="PDB" id="5MRU">
    <property type="method" value="X-ray"/>
    <property type="resolution" value="2.55 A"/>
    <property type="chains" value="A=1-216"/>
</dbReference>
<dbReference type="PDBsum" id="5MRU"/>
<dbReference type="SMR" id="P03038"/>
<dbReference type="GO" id="GO:0003700">
    <property type="term" value="F:DNA-binding transcription factor activity"/>
    <property type="evidence" value="ECO:0007669"/>
    <property type="project" value="TreeGrafter"/>
</dbReference>
<dbReference type="GO" id="GO:0046872">
    <property type="term" value="F:metal ion binding"/>
    <property type="evidence" value="ECO:0007669"/>
    <property type="project" value="UniProtKB-KW"/>
</dbReference>
<dbReference type="GO" id="GO:0000976">
    <property type="term" value="F:transcription cis-regulatory region binding"/>
    <property type="evidence" value="ECO:0007669"/>
    <property type="project" value="TreeGrafter"/>
</dbReference>
<dbReference type="GO" id="GO:0045892">
    <property type="term" value="P:negative regulation of DNA-templated transcription"/>
    <property type="evidence" value="ECO:0007669"/>
    <property type="project" value="InterPro"/>
</dbReference>
<dbReference type="GO" id="GO:0046677">
    <property type="term" value="P:response to antibiotic"/>
    <property type="evidence" value="ECO:0007669"/>
    <property type="project" value="UniProtKB-KW"/>
</dbReference>
<dbReference type="Gene3D" id="1.10.10.60">
    <property type="entry name" value="Homeodomain-like"/>
    <property type="match status" value="1"/>
</dbReference>
<dbReference type="Gene3D" id="1.10.357.10">
    <property type="entry name" value="Tetracycline Repressor, domain 2"/>
    <property type="match status" value="1"/>
</dbReference>
<dbReference type="InterPro" id="IPR023772">
    <property type="entry name" value="DNA-bd_HTH_TetR-type_CS"/>
</dbReference>
<dbReference type="InterPro" id="IPR009057">
    <property type="entry name" value="Homeodomain-like_sf"/>
</dbReference>
<dbReference type="InterPro" id="IPR050109">
    <property type="entry name" value="HTH-type_TetR-like_transc_reg"/>
</dbReference>
<dbReference type="InterPro" id="IPR001647">
    <property type="entry name" value="HTH_TetR"/>
</dbReference>
<dbReference type="InterPro" id="IPR004111">
    <property type="entry name" value="Repressor_TetR_C"/>
</dbReference>
<dbReference type="InterPro" id="IPR003012">
    <property type="entry name" value="Tet_transcr_reg_TetR"/>
</dbReference>
<dbReference type="InterPro" id="IPR036271">
    <property type="entry name" value="Tet_transcr_reg_TetR-rel_C_sf"/>
</dbReference>
<dbReference type="NCBIfam" id="NF010319">
    <property type="entry name" value="PRK13756.1"/>
    <property type="match status" value="1"/>
</dbReference>
<dbReference type="PANTHER" id="PTHR30055">
    <property type="entry name" value="HTH-TYPE TRANSCRIPTIONAL REGULATOR RUTR"/>
    <property type="match status" value="1"/>
</dbReference>
<dbReference type="PANTHER" id="PTHR30055:SF151">
    <property type="entry name" value="TRANSCRIPTIONAL REGULATORY PROTEIN"/>
    <property type="match status" value="1"/>
</dbReference>
<dbReference type="Pfam" id="PF02909">
    <property type="entry name" value="TetR_C_1"/>
    <property type="match status" value="1"/>
</dbReference>
<dbReference type="Pfam" id="PF00440">
    <property type="entry name" value="TetR_N"/>
    <property type="match status" value="1"/>
</dbReference>
<dbReference type="PRINTS" id="PR00455">
    <property type="entry name" value="HTHTETR"/>
</dbReference>
<dbReference type="PRINTS" id="PR00400">
    <property type="entry name" value="TETREPRESSOR"/>
</dbReference>
<dbReference type="SUPFAM" id="SSF46689">
    <property type="entry name" value="Homeodomain-like"/>
    <property type="match status" value="1"/>
</dbReference>
<dbReference type="SUPFAM" id="SSF48498">
    <property type="entry name" value="Tetracyclin repressor-like, C-terminal domain"/>
    <property type="match status" value="1"/>
</dbReference>
<dbReference type="PROSITE" id="PS01081">
    <property type="entry name" value="HTH_TETR_1"/>
    <property type="match status" value="1"/>
</dbReference>
<dbReference type="PROSITE" id="PS50977">
    <property type="entry name" value="HTH_TETR_2"/>
    <property type="match status" value="1"/>
</dbReference>
<name>TETR1_ECOLX</name>